<reference key="1">
    <citation type="submission" date="2007-09" db="EMBL/GenBank/DDBJ databases">
        <title>Complete genome sequence of Rickettsia canadensis.</title>
        <authorList>
            <person name="Madan A."/>
            <person name="Fahey J."/>
            <person name="Helton E."/>
            <person name="Ketteman M."/>
            <person name="Madan A."/>
            <person name="Rodrigues S."/>
            <person name="Sanchez A."/>
            <person name="Whiting M."/>
            <person name="Dasch G."/>
            <person name="Eremeeva M."/>
        </authorList>
    </citation>
    <scope>NUCLEOTIDE SEQUENCE [LARGE SCALE GENOMIC DNA]</scope>
    <source>
        <strain>McKiel</strain>
    </source>
</reference>
<name>DNAA_RICCK</name>
<accession>A8EY77</accession>
<sequence length="463" mass="53040">MSTNQIILTDQGDNYLNVWSHVAQDLYNHYGETLYNSWFSKVNFIESSLNTVILCAPTNFVRDWIKSKYSMVILQLFQHYNNTIKSVEIITKELPGTSKTVIELPTKTFADIGSSELNAENIFSTLDVRFTFDNFVVGVPNELAYAAARAVAESTDAVSESNPLFLYGGVGLGKTHLMHAIGWYIKQNNPNRKVIYMSAEKFMYQFVKALRNKEVISFKEKFRSVDVLMIDDIQFICGKDSTQEEFFHTFNTLIDNNRQIVISCDRSPSDLDNIEDRIKSRLGWGLVADVHSTTYELRLGILESKIEQMNVKIPKNVIDFLASKIVSNVRELEGALNKVIAHSNFTLKEITLENTQNILRDLLRSNERIITVEDIQKKVASRYNIKLSDMSSSRRLREVARPRQIAMYLSKTLTPKSLADIGKKFGKKDHTTVMHAIKKVEELLENDIELREEINLLMKILQN</sequence>
<evidence type="ECO:0000255" key="1">
    <source>
        <dbReference type="HAMAP-Rule" id="MF_00377"/>
    </source>
</evidence>
<protein>
    <recommendedName>
        <fullName evidence="1">Chromosomal replication initiator protein DnaA</fullName>
    </recommendedName>
</protein>
<dbReference type="EMBL" id="CP000409">
    <property type="protein sequence ID" value="ABV73310.1"/>
    <property type="molecule type" value="Genomic_DNA"/>
</dbReference>
<dbReference type="RefSeq" id="WP_012148509.1">
    <property type="nucleotide sequence ID" value="NC_009879.1"/>
</dbReference>
<dbReference type="SMR" id="A8EY77"/>
<dbReference type="STRING" id="293613.A1E_01825"/>
<dbReference type="KEGG" id="rcm:A1E_01825"/>
<dbReference type="eggNOG" id="COG0593">
    <property type="taxonomic scope" value="Bacteria"/>
</dbReference>
<dbReference type="HOGENOM" id="CLU_026910_3_0_5"/>
<dbReference type="Proteomes" id="UP000007056">
    <property type="component" value="Chromosome"/>
</dbReference>
<dbReference type="GO" id="GO:0005737">
    <property type="term" value="C:cytoplasm"/>
    <property type="evidence" value="ECO:0007669"/>
    <property type="project" value="UniProtKB-SubCell"/>
</dbReference>
<dbReference type="GO" id="GO:0005886">
    <property type="term" value="C:plasma membrane"/>
    <property type="evidence" value="ECO:0007669"/>
    <property type="project" value="TreeGrafter"/>
</dbReference>
<dbReference type="GO" id="GO:0005524">
    <property type="term" value="F:ATP binding"/>
    <property type="evidence" value="ECO:0007669"/>
    <property type="project" value="UniProtKB-UniRule"/>
</dbReference>
<dbReference type="GO" id="GO:0016887">
    <property type="term" value="F:ATP hydrolysis activity"/>
    <property type="evidence" value="ECO:0007669"/>
    <property type="project" value="InterPro"/>
</dbReference>
<dbReference type="GO" id="GO:0003688">
    <property type="term" value="F:DNA replication origin binding"/>
    <property type="evidence" value="ECO:0007669"/>
    <property type="project" value="UniProtKB-UniRule"/>
</dbReference>
<dbReference type="GO" id="GO:0008289">
    <property type="term" value="F:lipid binding"/>
    <property type="evidence" value="ECO:0007669"/>
    <property type="project" value="UniProtKB-KW"/>
</dbReference>
<dbReference type="GO" id="GO:0006270">
    <property type="term" value="P:DNA replication initiation"/>
    <property type="evidence" value="ECO:0007669"/>
    <property type="project" value="UniProtKB-UniRule"/>
</dbReference>
<dbReference type="GO" id="GO:0006275">
    <property type="term" value="P:regulation of DNA replication"/>
    <property type="evidence" value="ECO:0007669"/>
    <property type="project" value="UniProtKB-UniRule"/>
</dbReference>
<dbReference type="CDD" id="cd00009">
    <property type="entry name" value="AAA"/>
    <property type="match status" value="1"/>
</dbReference>
<dbReference type="CDD" id="cd06571">
    <property type="entry name" value="Bac_DnaA_C"/>
    <property type="match status" value="1"/>
</dbReference>
<dbReference type="FunFam" id="3.40.50.300:FF:000668">
    <property type="entry name" value="Chromosomal replication initiator protein DnaA"/>
    <property type="match status" value="1"/>
</dbReference>
<dbReference type="Gene3D" id="1.10.1750.10">
    <property type="match status" value="1"/>
</dbReference>
<dbReference type="Gene3D" id="1.10.8.60">
    <property type="match status" value="1"/>
</dbReference>
<dbReference type="Gene3D" id="3.30.300.180">
    <property type="match status" value="1"/>
</dbReference>
<dbReference type="Gene3D" id="3.40.50.300">
    <property type="entry name" value="P-loop containing nucleotide triphosphate hydrolases"/>
    <property type="match status" value="1"/>
</dbReference>
<dbReference type="HAMAP" id="MF_00377">
    <property type="entry name" value="DnaA_bact"/>
    <property type="match status" value="1"/>
</dbReference>
<dbReference type="InterPro" id="IPR003593">
    <property type="entry name" value="AAA+_ATPase"/>
</dbReference>
<dbReference type="InterPro" id="IPR001957">
    <property type="entry name" value="Chromosome_initiator_DnaA"/>
</dbReference>
<dbReference type="InterPro" id="IPR020591">
    <property type="entry name" value="Chromosome_initiator_DnaA-like"/>
</dbReference>
<dbReference type="InterPro" id="IPR018312">
    <property type="entry name" value="Chromosome_initiator_DnaA_CS"/>
</dbReference>
<dbReference type="InterPro" id="IPR013159">
    <property type="entry name" value="DnaA_C"/>
</dbReference>
<dbReference type="InterPro" id="IPR013317">
    <property type="entry name" value="DnaA_dom"/>
</dbReference>
<dbReference type="InterPro" id="IPR024633">
    <property type="entry name" value="DnaA_N_dom"/>
</dbReference>
<dbReference type="InterPro" id="IPR038454">
    <property type="entry name" value="DnaA_N_sf"/>
</dbReference>
<dbReference type="InterPro" id="IPR027417">
    <property type="entry name" value="P-loop_NTPase"/>
</dbReference>
<dbReference type="InterPro" id="IPR010921">
    <property type="entry name" value="Trp_repressor/repl_initiator"/>
</dbReference>
<dbReference type="NCBIfam" id="TIGR00362">
    <property type="entry name" value="DnaA"/>
    <property type="match status" value="1"/>
</dbReference>
<dbReference type="PANTHER" id="PTHR30050">
    <property type="entry name" value="CHROMOSOMAL REPLICATION INITIATOR PROTEIN DNAA"/>
    <property type="match status" value="1"/>
</dbReference>
<dbReference type="PANTHER" id="PTHR30050:SF2">
    <property type="entry name" value="CHROMOSOMAL REPLICATION INITIATOR PROTEIN DNAA"/>
    <property type="match status" value="1"/>
</dbReference>
<dbReference type="Pfam" id="PF00308">
    <property type="entry name" value="Bac_DnaA"/>
    <property type="match status" value="1"/>
</dbReference>
<dbReference type="Pfam" id="PF08299">
    <property type="entry name" value="Bac_DnaA_C"/>
    <property type="match status" value="1"/>
</dbReference>
<dbReference type="Pfam" id="PF11638">
    <property type="entry name" value="DnaA_N"/>
    <property type="match status" value="1"/>
</dbReference>
<dbReference type="PRINTS" id="PR00051">
    <property type="entry name" value="DNAA"/>
</dbReference>
<dbReference type="SMART" id="SM00382">
    <property type="entry name" value="AAA"/>
    <property type="match status" value="1"/>
</dbReference>
<dbReference type="SMART" id="SM00760">
    <property type="entry name" value="Bac_DnaA_C"/>
    <property type="match status" value="1"/>
</dbReference>
<dbReference type="SUPFAM" id="SSF52540">
    <property type="entry name" value="P-loop containing nucleoside triphosphate hydrolases"/>
    <property type="match status" value="1"/>
</dbReference>
<dbReference type="SUPFAM" id="SSF48295">
    <property type="entry name" value="TrpR-like"/>
    <property type="match status" value="1"/>
</dbReference>
<dbReference type="PROSITE" id="PS01008">
    <property type="entry name" value="DNAA"/>
    <property type="match status" value="1"/>
</dbReference>
<gene>
    <name evidence="1" type="primary">dnaA</name>
    <name type="ordered locus">A1E_01825</name>
</gene>
<proteinExistence type="inferred from homology"/>
<keyword id="KW-0067">ATP-binding</keyword>
<keyword id="KW-0963">Cytoplasm</keyword>
<keyword id="KW-0235">DNA replication</keyword>
<keyword id="KW-0238">DNA-binding</keyword>
<keyword id="KW-0446">Lipid-binding</keyword>
<keyword id="KW-0547">Nucleotide-binding</keyword>
<feature type="chain" id="PRO_1000048711" description="Chromosomal replication initiator protein DnaA">
    <location>
        <begin position="1"/>
        <end position="463"/>
    </location>
</feature>
<feature type="region of interest" description="Domain I, interacts with DnaA modulators" evidence="1">
    <location>
        <begin position="1"/>
        <end position="83"/>
    </location>
</feature>
<feature type="region of interest" description="Domain II" evidence="1">
    <location>
        <begin position="83"/>
        <end position="124"/>
    </location>
</feature>
<feature type="region of interest" description="Domain III, AAA+ region" evidence="1">
    <location>
        <begin position="125"/>
        <end position="343"/>
    </location>
</feature>
<feature type="region of interest" description="Domain IV, binds dsDNA" evidence="1">
    <location>
        <begin position="344"/>
        <end position="463"/>
    </location>
</feature>
<feature type="binding site" evidence="1">
    <location>
        <position position="171"/>
    </location>
    <ligand>
        <name>ATP</name>
        <dbReference type="ChEBI" id="CHEBI:30616"/>
    </ligand>
</feature>
<feature type="binding site" evidence="1">
    <location>
        <position position="173"/>
    </location>
    <ligand>
        <name>ATP</name>
        <dbReference type="ChEBI" id="CHEBI:30616"/>
    </ligand>
</feature>
<feature type="binding site" evidence="1">
    <location>
        <position position="174"/>
    </location>
    <ligand>
        <name>ATP</name>
        <dbReference type="ChEBI" id="CHEBI:30616"/>
    </ligand>
</feature>
<feature type="binding site" evidence="1">
    <location>
        <position position="175"/>
    </location>
    <ligand>
        <name>ATP</name>
        <dbReference type="ChEBI" id="CHEBI:30616"/>
    </ligand>
</feature>
<organism>
    <name type="scientific">Rickettsia canadensis (strain McKiel)</name>
    <dbReference type="NCBI Taxonomy" id="293613"/>
    <lineage>
        <taxon>Bacteria</taxon>
        <taxon>Pseudomonadati</taxon>
        <taxon>Pseudomonadota</taxon>
        <taxon>Alphaproteobacteria</taxon>
        <taxon>Rickettsiales</taxon>
        <taxon>Rickettsiaceae</taxon>
        <taxon>Rickettsieae</taxon>
        <taxon>Rickettsia</taxon>
        <taxon>belli group</taxon>
    </lineage>
</organism>
<comment type="function">
    <text evidence="1">Plays an essential role in the initiation and regulation of chromosomal replication. ATP-DnaA binds to the origin of replication (oriC) to initiate formation of the DNA replication initiation complex once per cell cycle. Binds the DnaA box (a 9 base pair repeat at the origin) and separates the double-stranded (ds)DNA. Forms a right-handed helical filament on oriC DNA; dsDNA binds to the exterior of the filament while single-stranded (ss)DNA is stabiized in the filament's interior. The ATP-DnaA-oriC complex binds and stabilizes one strand of the AT-rich DNA unwinding element (DUE), permitting loading of DNA polymerase. After initiation quickly degrades to an ADP-DnaA complex that is not apt for DNA replication. Binds acidic phospholipids.</text>
</comment>
<comment type="subunit">
    <text evidence="1">Oligomerizes as a right-handed, spiral filament on DNA at oriC.</text>
</comment>
<comment type="subcellular location">
    <subcellularLocation>
        <location evidence="1">Cytoplasm</location>
    </subcellularLocation>
</comment>
<comment type="domain">
    <text evidence="1">Domain I is involved in oligomerization and binding regulators, domain II is flexibile and of varying length in different bacteria, domain III forms the AAA+ region, while domain IV binds dsDNA.</text>
</comment>
<comment type="similarity">
    <text evidence="1">Belongs to the DnaA family.</text>
</comment>